<sequence length="307" mass="34585">MTDSSYDAQAVRSWLQGLQTHIADTLGAFDGTPFATDAWQRAPGEKLRGGGYTRILEGGKFFERAGIGFSDVAGDALPGSASAARPQLAGRGFEAMGVSLVLHPHNPHCPTVHMNVRLLIATKPGEEPVFWFGGGMDLTPYYGYEEDARHFHRTCRDALQPYGADLYPSFKRWCDEYFFLKHRNEARGIGGIFFDDFSAPGFDQSFAMLKSVGDAFLKAYLPIVEKRRNIPYGQAERDFQAYRRGRYVEFNLVFDRGTLFGLQSGGRTESILMSMPPVVNWRYNWHPEPGTPEARLYSDFLVPREWV</sequence>
<gene>
    <name evidence="1" type="primary">hemF</name>
    <name type="ordered locus">Bphyt_1299</name>
</gene>
<organism>
    <name type="scientific">Paraburkholderia phytofirmans (strain DSM 17436 / LMG 22146 / PsJN)</name>
    <name type="common">Burkholderia phytofirmans</name>
    <dbReference type="NCBI Taxonomy" id="398527"/>
    <lineage>
        <taxon>Bacteria</taxon>
        <taxon>Pseudomonadati</taxon>
        <taxon>Pseudomonadota</taxon>
        <taxon>Betaproteobacteria</taxon>
        <taxon>Burkholderiales</taxon>
        <taxon>Burkholderiaceae</taxon>
        <taxon>Paraburkholderia</taxon>
    </lineage>
</organism>
<evidence type="ECO:0000255" key="1">
    <source>
        <dbReference type="HAMAP-Rule" id="MF_00333"/>
    </source>
</evidence>
<accession>B2T2A3</accession>
<dbReference type="EC" id="1.3.3.3" evidence="1"/>
<dbReference type="EMBL" id="CP001052">
    <property type="protein sequence ID" value="ACD15714.1"/>
    <property type="molecule type" value="Genomic_DNA"/>
</dbReference>
<dbReference type="RefSeq" id="WP_012432334.1">
    <property type="nucleotide sequence ID" value="NC_010681.1"/>
</dbReference>
<dbReference type="SMR" id="B2T2A3"/>
<dbReference type="STRING" id="398527.Bphyt_1299"/>
<dbReference type="KEGG" id="bpy:Bphyt_1299"/>
<dbReference type="eggNOG" id="COG0408">
    <property type="taxonomic scope" value="Bacteria"/>
</dbReference>
<dbReference type="HOGENOM" id="CLU_026169_0_1_4"/>
<dbReference type="OrthoDB" id="9777553at2"/>
<dbReference type="UniPathway" id="UPA00251">
    <property type="reaction ID" value="UER00322"/>
</dbReference>
<dbReference type="Proteomes" id="UP000001739">
    <property type="component" value="Chromosome 1"/>
</dbReference>
<dbReference type="GO" id="GO:0005737">
    <property type="term" value="C:cytoplasm"/>
    <property type="evidence" value="ECO:0007669"/>
    <property type="project" value="UniProtKB-SubCell"/>
</dbReference>
<dbReference type="GO" id="GO:0004109">
    <property type="term" value="F:coproporphyrinogen oxidase activity"/>
    <property type="evidence" value="ECO:0007669"/>
    <property type="project" value="UniProtKB-UniRule"/>
</dbReference>
<dbReference type="GO" id="GO:0046872">
    <property type="term" value="F:metal ion binding"/>
    <property type="evidence" value="ECO:0007669"/>
    <property type="project" value="UniProtKB-KW"/>
</dbReference>
<dbReference type="GO" id="GO:0042803">
    <property type="term" value="F:protein homodimerization activity"/>
    <property type="evidence" value="ECO:0000250"/>
    <property type="project" value="UniProtKB"/>
</dbReference>
<dbReference type="GO" id="GO:0006782">
    <property type="term" value="P:protoporphyrinogen IX biosynthetic process"/>
    <property type="evidence" value="ECO:0007669"/>
    <property type="project" value="UniProtKB-UniRule"/>
</dbReference>
<dbReference type="FunFam" id="3.40.1500.10:FF:000001">
    <property type="entry name" value="Oxygen-dependent coproporphyrinogen-III oxidase"/>
    <property type="match status" value="1"/>
</dbReference>
<dbReference type="Gene3D" id="3.40.1500.10">
    <property type="entry name" value="Coproporphyrinogen III oxidase, aerobic"/>
    <property type="match status" value="1"/>
</dbReference>
<dbReference type="HAMAP" id="MF_00333">
    <property type="entry name" value="Coprogen_oxidas"/>
    <property type="match status" value="1"/>
</dbReference>
<dbReference type="InterPro" id="IPR001260">
    <property type="entry name" value="Coprogen_oxidase_aer"/>
</dbReference>
<dbReference type="InterPro" id="IPR036406">
    <property type="entry name" value="Coprogen_oxidase_aer_sf"/>
</dbReference>
<dbReference type="InterPro" id="IPR018375">
    <property type="entry name" value="Coprogen_oxidase_CS"/>
</dbReference>
<dbReference type="NCBIfam" id="NF003727">
    <property type="entry name" value="PRK05330.1"/>
    <property type="match status" value="1"/>
</dbReference>
<dbReference type="PANTHER" id="PTHR10755">
    <property type="entry name" value="COPROPORPHYRINOGEN III OXIDASE, MITOCHONDRIAL"/>
    <property type="match status" value="1"/>
</dbReference>
<dbReference type="PANTHER" id="PTHR10755:SF0">
    <property type="entry name" value="OXYGEN-DEPENDENT COPROPORPHYRINOGEN-III OXIDASE, MITOCHONDRIAL"/>
    <property type="match status" value="1"/>
</dbReference>
<dbReference type="Pfam" id="PF01218">
    <property type="entry name" value="Coprogen_oxidas"/>
    <property type="match status" value="1"/>
</dbReference>
<dbReference type="PIRSF" id="PIRSF000166">
    <property type="entry name" value="Coproporphyri_ox"/>
    <property type="match status" value="1"/>
</dbReference>
<dbReference type="PRINTS" id="PR00073">
    <property type="entry name" value="COPRGNOXDASE"/>
</dbReference>
<dbReference type="SUPFAM" id="SSF102886">
    <property type="entry name" value="Coproporphyrinogen III oxidase"/>
    <property type="match status" value="1"/>
</dbReference>
<dbReference type="PROSITE" id="PS01021">
    <property type="entry name" value="COPROGEN_OXIDASE"/>
    <property type="match status" value="1"/>
</dbReference>
<feature type="chain" id="PRO_1000119794" description="Oxygen-dependent coproporphyrinogen-III oxidase">
    <location>
        <begin position="1"/>
        <end position="307"/>
    </location>
</feature>
<feature type="region of interest" description="Important for dimerization" evidence="1">
    <location>
        <begin position="247"/>
        <end position="282"/>
    </location>
</feature>
<feature type="active site" description="Proton donor" evidence="1">
    <location>
        <position position="113"/>
    </location>
</feature>
<feature type="binding site" evidence="1">
    <location>
        <position position="99"/>
    </location>
    <ligand>
        <name>substrate</name>
    </ligand>
</feature>
<feature type="binding site" evidence="1">
    <location>
        <position position="103"/>
    </location>
    <ligand>
        <name>a divalent metal cation</name>
        <dbReference type="ChEBI" id="CHEBI:60240"/>
    </ligand>
</feature>
<feature type="binding site" evidence="1">
    <location>
        <position position="113"/>
    </location>
    <ligand>
        <name>a divalent metal cation</name>
        <dbReference type="ChEBI" id="CHEBI:60240"/>
    </ligand>
</feature>
<feature type="binding site" evidence="1">
    <location>
        <begin position="115"/>
        <end position="117"/>
    </location>
    <ligand>
        <name>substrate</name>
    </ligand>
</feature>
<feature type="binding site" evidence="1">
    <location>
        <position position="152"/>
    </location>
    <ligand>
        <name>a divalent metal cation</name>
        <dbReference type="ChEBI" id="CHEBI:60240"/>
    </ligand>
</feature>
<feature type="binding site" evidence="1">
    <location>
        <position position="182"/>
    </location>
    <ligand>
        <name>a divalent metal cation</name>
        <dbReference type="ChEBI" id="CHEBI:60240"/>
    </ligand>
</feature>
<feature type="binding site" evidence="1">
    <location>
        <begin position="265"/>
        <end position="267"/>
    </location>
    <ligand>
        <name>substrate</name>
    </ligand>
</feature>
<feature type="site" description="Important for dimerization" evidence="1">
    <location>
        <position position="182"/>
    </location>
</feature>
<protein>
    <recommendedName>
        <fullName evidence="1">Oxygen-dependent coproporphyrinogen-III oxidase</fullName>
        <shortName evidence="1">CPO</shortName>
        <shortName evidence="1">Coprogen oxidase</shortName>
        <shortName evidence="1">Coproporphyrinogenase</shortName>
        <ecNumber evidence="1">1.3.3.3</ecNumber>
    </recommendedName>
</protein>
<reference key="1">
    <citation type="journal article" date="2011" name="J. Bacteriol.">
        <title>Complete genome sequence of the plant growth-promoting endophyte Burkholderia phytofirmans strain PsJN.</title>
        <authorList>
            <person name="Weilharter A."/>
            <person name="Mitter B."/>
            <person name="Shin M.V."/>
            <person name="Chain P.S."/>
            <person name="Nowak J."/>
            <person name="Sessitsch A."/>
        </authorList>
    </citation>
    <scope>NUCLEOTIDE SEQUENCE [LARGE SCALE GENOMIC DNA]</scope>
    <source>
        <strain>DSM 17436 / LMG 22146 / PsJN</strain>
    </source>
</reference>
<comment type="function">
    <text evidence="1">Involved in the heme biosynthesis. Catalyzes the aerobic oxidative decarboxylation of propionate groups of rings A and B of coproporphyrinogen-III to yield the vinyl groups in protoporphyrinogen-IX.</text>
</comment>
<comment type="catalytic activity">
    <reaction evidence="1">
        <text>coproporphyrinogen III + O2 + 2 H(+) = protoporphyrinogen IX + 2 CO2 + 2 H2O</text>
        <dbReference type="Rhea" id="RHEA:18257"/>
        <dbReference type="ChEBI" id="CHEBI:15377"/>
        <dbReference type="ChEBI" id="CHEBI:15378"/>
        <dbReference type="ChEBI" id="CHEBI:15379"/>
        <dbReference type="ChEBI" id="CHEBI:16526"/>
        <dbReference type="ChEBI" id="CHEBI:57307"/>
        <dbReference type="ChEBI" id="CHEBI:57309"/>
        <dbReference type="EC" id="1.3.3.3"/>
    </reaction>
</comment>
<comment type="cofactor">
    <cofactor evidence="1">
        <name>a divalent metal cation</name>
        <dbReference type="ChEBI" id="CHEBI:60240"/>
    </cofactor>
</comment>
<comment type="pathway">
    <text evidence="1">Porphyrin-containing compound metabolism; protoporphyrin-IX biosynthesis; protoporphyrinogen-IX from coproporphyrinogen-III (O2 route): step 1/1.</text>
</comment>
<comment type="subunit">
    <text evidence="1">Homodimer.</text>
</comment>
<comment type="subcellular location">
    <subcellularLocation>
        <location evidence="1">Cytoplasm</location>
    </subcellularLocation>
</comment>
<comment type="similarity">
    <text evidence="1">Belongs to the aerobic coproporphyrinogen-III oxidase family.</text>
</comment>
<name>HEM6_PARPJ</name>
<proteinExistence type="inferred from homology"/>
<keyword id="KW-0963">Cytoplasm</keyword>
<keyword id="KW-0350">Heme biosynthesis</keyword>
<keyword id="KW-0479">Metal-binding</keyword>
<keyword id="KW-0560">Oxidoreductase</keyword>
<keyword id="KW-0627">Porphyrin biosynthesis</keyword>